<evidence type="ECO:0000255" key="1">
    <source>
        <dbReference type="HAMAP-Rule" id="MF_00528"/>
    </source>
</evidence>
<gene>
    <name type="ordered locus">A1G_06950</name>
</gene>
<feature type="chain" id="PRO_1000060962" description="Nucleoside triphosphate pyrophosphatase">
    <location>
        <begin position="1"/>
        <end position="215"/>
    </location>
</feature>
<feature type="active site" description="Proton acceptor" evidence="1">
    <location>
        <position position="77"/>
    </location>
</feature>
<organism>
    <name type="scientific">Rickettsia rickettsii (strain Sheila Smith)</name>
    <dbReference type="NCBI Taxonomy" id="392021"/>
    <lineage>
        <taxon>Bacteria</taxon>
        <taxon>Pseudomonadati</taxon>
        <taxon>Pseudomonadota</taxon>
        <taxon>Alphaproteobacteria</taxon>
        <taxon>Rickettsiales</taxon>
        <taxon>Rickettsiaceae</taxon>
        <taxon>Rickettsieae</taxon>
        <taxon>Rickettsia</taxon>
        <taxon>spotted fever group</taxon>
    </lineage>
</organism>
<sequence length="215" mass="23808">MKQNRKNLPIILASSSPARIELLNRIKIIPSQIIPADIDETPNLRELPAPLAIRLAYEKAIKIASQIEESAIIIAADTVAAVGRRILPKATTYEEVKNCIKMLSGRRHRVYTGLCIIKKENDQLTVRQKIVQTIVKFKKLSDEEINFYCSLDEGIDKAGGCKISGYAEAFISFISGSYSNVMGLPLFETVNALTSLGFRCSSIMPAKMNYCHSAT</sequence>
<protein>
    <recommendedName>
        <fullName evidence="1">Nucleoside triphosphate pyrophosphatase</fullName>
        <ecNumber evidence="1">3.6.1.9</ecNumber>
    </recommendedName>
    <alternativeName>
        <fullName evidence="1">Nucleotide pyrophosphatase</fullName>
        <shortName evidence="1">Nucleotide PPase</shortName>
    </alternativeName>
</protein>
<dbReference type="EC" id="3.6.1.9" evidence="1"/>
<dbReference type="EMBL" id="CP000848">
    <property type="protein sequence ID" value="ABV76831.1"/>
    <property type="molecule type" value="Genomic_DNA"/>
</dbReference>
<dbReference type="RefSeq" id="WP_012151371.1">
    <property type="nucleotide sequence ID" value="NZ_CP121767.1"/>
</dbReference>
<dbReference type="SMR" id="A8GTV6"/>
<dbReference type="GeneID" id="79937868"/>
<dbReference type="KEGG" id="rri:A1G_06950"/>
<dbReference type="HOGENOM" id="CLU_040416_2_0_5"/>
<dbReference type="Proteomes" id="UP000006832">
    <property type="component" value="Chromosome"/>
</dbReference>
<dbReference type="GO" id="GO:0005737">
    <property type="term" value="C:cytoplasm"/>
    <property type="evidence" value="ECO:0007669"/>
    <property type="project" value="UniProtKB-SubCell"/>
</dbReference>
<dbReference type="GO" id="GO:0047429">
    <property type="term" value="F:nucleoside triphosphate diphosphatase activity"/>
    <property type="evidence" value="ECO:0007669"/>
    <property type="project" value="UniProtKB-EC"/>
</dbReference>
<dbReference type="GO" id="GO:0009117">
    <property type="term" value="P:nucleotide metabolic process"/>
    <property type="evidence" value="ECO:0007669"/>
    <property type="project" value="UniProtKB-KW"/>
</dbReference>
<dbReference type="CDD" id="cd00555">
    <property type="entry name" value="Maf"/>
    <property type="match status" value="1"/>
</dbReference>
<dbReference type="Gene3D" id="3.90.950.10">
    <property type="match status" value="1"/>
</dbReference>
<dbReference type="HAMAP" id="MF_00528">
    <property type="entry name" value="Maf"/>
    <property type="match status" value="1"/>
</dbReference>
<dbReference type="InterPro" id="IPR029001">
    <property type="entry name" value="ITPase-like_fam"/>
</dbReference>
<dbReference type="InterPro" id="IPR003697">
    <property type="entry name" value="Maf-like"/>
</dbReference>
<dbReference type="NCBIfam" id="TIGR00172">
    <property type="entry name" value="maf"/>
    <property type="match status" value="1"/>
</dbReference>
<dbReference type="PANTHER" id="PTHR43213">
    <property type="entry name" value="BIFUNCTIONAL DTTP/UTP PYROPHOSPHATASE/METHYLTRANSFERASE PROTEIN-RELATED"/>
    <property type="match status" value="1"/>
</dbReference>
<dbReference type="PANTHER" id="PTHR43213:SF5">
    <property type="entry name" value="BIFUNCTIONAL DTTP_UTP PYROPHOSPHATASE_METHYLTRANSFERASE PROTEIN-RELATED"/>
    <property type="match status" value="1"/>
</dbReference>
<dbReference type="Pfam" id="PF02545">
    <property type="entry name" value="Maf"/>
    <property type="match status" value="1"/>
</dbReference>
<dbReference type="PIRSF" id="PIRSF006305">
    <property type="entry name" value="Maf"/>
    <property type="match status" value="1"/>
</dbReference>
<dbReference type="SUPFAM" id="SSF52972">
    <property type="entry name" value="ITPase-like"/>
    <property type="match status" value="1"/>
</dbReference>
<accession>A8GTV6</accession>
<name>NTPP_RICRS</name>
<proteinExistence type="inferred from homology"/>
<comment type="function">
    <text evidence="1">Nucleoside triphosphate pyrophosphatase. May have a dual role in cell division arrest and in preventing the incorporation of modified nucleotides into cellular nucleic acids.</text>
</comment>
<comment type="catalytic activity">
    <reaction evidence="1">
        <text>a ribonucleoside 5'-triphosphate + H2O = a ribonucleoside 5'-phosphate + diphosphate + H(+)</text>
        <dbReference type="Rhea" id="RHEA:23996"/>
        <dbReference type="ChEBI" id="CHEBI:15377"/>
        <dbReference type="ChEBI" id="CHEBI:15378"/>
        <dbReference type="ChEBI" id="CHEBI:33019"/>
        <dbReference type="ChEBI" id="CHEBI:58043"/>
        <dbReference type="ChEBI" id="CHEBI:61557"/>
        <dbReference type="EC" id="3.6.1.9"/>
    </reaction>
</comment>
<comment type="catalytic activity">
    <reaction evidence="1">
        <text>a 2'-deoxyribonucleoside 5'-triphosphate + H2O = a 2'-deoxyribonucleoside 5'-phosphate + diphosphate + H(+)</text>
        <dbReference type="Rhea" id="RHEA:44644"/>
        <dbReference type="ChEBI" id="CHEBI:15377"/>
        <dbReference type="ChEBI" id="CHEBI:15378"/>
        <dbReference type="ChEBI" id="CHEBI:33019"/>
        <dbReference type="ChEBI" id="CHEBI:61560"/>
        <dbReference type="ChEBI" id="CHEBI:65317"/>
        <dbReference type="EC" id="3.6.1.9"/>
    </reaction>
</comment>
<comment type="cofactor">
    <cofactor evidence="1">
        <name>a divalent metal cation</name>
        <dbReference type="ChEBI" id="CHEBI:60240"/>
    </cofactor>
</comment>
<comment type="subcellular location">
    <subcellularLocation>
        <location evidence="1">Cytoplasm</location>
    </subcellularLocation>
</comment>
<comment type="similarity">
    <text evidence="1">Belongs to the Maf family.</text>
</comment>
<reference key="1">
    <citation type="submission" date="2007-09" db="EMBL/GenBank/DDBJ databases">
        <title>Complete genome sequence of Rickettsia rickettsii.</title>
        <authorList>
            <person name="Madan A."/>
            <person name="Fahey J."/>
            <person name="Helton E."/>
            <person name="Ketteman M."/>
            <person name="Madan A."/>
            <person name="Rodrigues S."/>
            <person name="Sanchez A."/>
            <person name="Dasch G."/>
            <person name="Eremeeva M."/>
        </authorList>
    </citation>
    <scope>NUCLEOTIDE SEQUENCE [LARGE SCALE GENOMIC DNA]</scope>
    <source>
        <strain>Sheila Smith</strain>
    </source>
</reference>
<keyword id="KW-0963">Cytoplasm</keyword>
<keyword id="KW-0378">Hydrolase</keyword>
<keyword id="KW-0546">Nucleotide metabolism</keyword>